<reference key="1">
    <citation type="journal article" date="2009" name="J. Bacteriol.">
        <title>The complete genome sequence of Bacillus anthracis Ames 'Ancestor'.</title>
        <authorList>
            <person name="Ravel J."/>
            <person name="Jiang L."/>
            <person name="Stanley S.T."/>
            <person name="Wilson M.R."/>
            <person name="Decker R.S."/>
            <person name="Read T.D."/>
            <person name="Worsham P."/>
            <person name="Keim P.S."/>
            <person name="Salzberg S.L."/>
            <person name="Fraser-Liggett C.M."/>
            <person name="Rasko D.A."/>
        </authorList>
    </citation>
    <scope>NUCLEOTIDE SEQUENCE [LARGE SCALE GENOMIC DNA]</scope>
    <source>
        <strain>Ames ancestor</strain>
    </source>
</reference>
<reference key="2">
    <citation type="journal article" date="2012" name="Mol. Microbiol.">
        <title>Multiple ABC transporters are involved in the acquisition of petrobactin in Bacillus anthracis.</title>
        <authorList>
            <person name="Dixon S.D."/>
            <person name="Janes B.K."/>
            <person name="Bourgis A."/>
            <person name="Carlson P.E. Jr."/>
            <person name="Hanna P.C."/>
        </authorList>
    </citation>
    <scope>FUNCTION</scope>
    <scope>SUBUNIT</scope>
    <scope>SUBCELLULAR LOCATION</scope>
    <scope>DISRUPTION PHENOTYPE</scope>
    <source>
        <strain>Sterne</strain>
    </source>
</reference>
<organism>
    <name type="scientific">Bacillus anthracis</name>
    <dbReference type="NCBI Taxonomy" id="1392"/>
    <lineage>
        <taxon>Bacteria</taxon>
        <taxon>Bacillati</taxon>
        <taxon>Bacillota</taxon>
        <taxon>Bacilli</taxon>
        <taxon>Bacillales</taxon>
        <taxon>Bacillaceae</taxon>
        <taxon>Bacillus</taxon>
        <taxon>Bacillus cereus group</taxon>
    </lineage>
</organism>
<proteinExistence type="evidence at protein level"/>
<feature type="chain" id="PRO_0000443814" description="Petrobactin import system permease protein FatC">
    <location>
        <begin position="1"/>
        <end position="354"/>
    </location>
</feature>
<feature type="transmembrane region" description="Helical" evidence="1">
    <location>
        <begin position="37"/>
        <end position="57"/>
    </location>
</feature>
<feature type="transmembrane region" description="Helical" evidence="1">
    <location>
        <begin position="77"/>
        <end position="97"/>
    </location>
</feature>
<feature type="transmembrane region" description="Helical" evidence="1">
    <location>
        <begin position="116"/>
        <end position="136"/>
    </location>
</feature>
<feature type="transmembrane region" description="Helical" evidence="1">
    <location>
        <begin position="141"/>
        <end position="161"/>
    </location>
</feature>
<feature type="transmembrane region" description="Helical" evidence="1">
    <location>
        <begin position="168"/>
        <end position="188"/>
    </location>
</feature>
<feature type="transmembrane region" description="Helical" evidence="1">
    <location>
        <begin position="214"/>
        <end position="234"/>
    </location>
</feature>
<feature type="transmembrane region" description="Helical" evidence="1">
    <location>
        <begin position="259"/>
        <end position="279"/>
    </location>
</feature>
<feature type="transmembrane region" description="Helical" evidence="1">
    <location>
        <begin position="302"/>
        <end position="322"/>
    </location>
</feature>
<feature type="transmembrane region" description="Helical" evidence="1">
    <location>
        <begin position="329"/>
        <end position="349"/>
    </location>
</feature>
<name>FATC_BACAN</name>
<sequence>MITLDYRNKENVEVDSSLHNESRSASAFRSKKEARRYWIVLITLIALGLLSSYGLLVYNNPVPIDSPSFIPVVKRRIVAIVAMIIAAVCHSLSTVAFQSITNNKIITPSLLGFESLYSAIQTSTVFFFGASALINFNGIGSFLFQVVVMVFMSLILYGWLLSGKYGNLQLMLLVGIIIGTGLNSVSTFMRKLLAPSEFDILQARLFGSVNHADPAYFPIVIPMIIIVAVLIFAHSKNLNVLSLGKDVATSFGVKYQPSVIYTLVLVAILMSISTALIGPLTFYGFLVATLSYQAAATYDHRYIFPMAFAIGFLIMTSAYFLMYHVFHAQGVVSVIIELFGGIIFLTIVLRKRAL</sequence>
<keyword id="KW-1003">Cell membrane</keyword>
<keyword id="KW-0406">Ion transport</keyword>
<keyword id="KW-0408">Iron</keyword>
<keyword id="KW-0410">Iron transport</keyword>
<keyword id="KW-0472">Membrane</keyword>
<keyword id="KW-1185">Reference proteome</keyword>
<keyword id="KW-0812">Transmembrane</keyword>
<keyword id="KW-1133">Transmembrane helix</keyword>
<keyword id="KW-0813">Transport</keyword>
<comment type="function">
    <text evidence="2">Part of an ABC transporter complex involved in ferric-petrobactin uptake. Probably responsible for the translocation of the substrate across the membrane.</text>
</comment>
<comment type="subunit">
    <text evidence="5">The complex is composed of two ATP-binding proteins (FatE), two transmembrane proteins (FatC and FatD) and a solute-binding protein (FpuA).</text>
</comment>
<comment type="subcellular location">
    <subcellularLocation>
        <location evidence="5">Cell membrane</location>
        <topology evidence="1">Multi-pass membrane protein</topology>
    </subcellularLocation>
</comment>
<comment type="disruption phenotype">
    <text evidence="2">A mutant lacking both fpuB and fatCD permeases is incapable of using petrobactin as an iron source and exhibits attenuated virulence in a murine model of inhalational anthrax infection.</text>
</comment>
<comment type="similarity">
    <text evidence="4">Belongs to the binding-protein-dependent transport system permease family. FecCD subfamily.</text>
</comment>
<protein>
    <recommendedName>
        <fullName evidence="4">Petrobactin import system permease protein FatC</fullName>
    </recommendedName>
</protein>
<evidence type="ECO:0000255" key="1"/>
<evidence type="ECO:0000269" key="2">
    <source>
    </source>
</evidence>
<evidence type="ECO:0000303" key="3">
    <source>
    </source>
</evidence>
<evidence type="ECO:0000305" key="4"/>
<evidence type="ECO:0000305" key="5">
    <source>
    </source>
</evidence>
<evidence type="ECO:0000312" key="6">
    <source>
        <dbReference type="EMBL" id="AAT34461.1"/>
    </source>
</evidence>
<dbReference type="EMBL" id="AE017334">
    <property type="protein sequence ID" value="AAT34461.1"/>
    <property type="molecule type" value="Genomic_DNA"/>
</dbReference>
<dbReference type="RefSeq" id="WP_000631132.1">
    <property type="nucleotide sequence ID" value="NZ_WXXJ01000007.1"/>
</dbReference>
<dbReference type="SMR" id="Q81XB2"/>
<dbReference type="STRING" id="261594.GBAA_5328"/>
<dbReference type="DNASU" id="1084831"/>
<dbReference type="GeneID" id="45024935"/>
<dbReference type="KEGG" id="bar:GBAA_5328"/>
<dbReference type="PATRIC" id="fig|1392.230.peg.5246"/>
<dbReference type="HOGENOM" id="CLU_050494_0_0_9"/>
<dbReference type="OMA" id="RMFASFN"/>
<dbReference type="OrthoDB" id="9796260at2"/>
<dbReference type="Proteomes" id="UP000000594">
    <property type="component" value="Chromosome"/>
</dbReference>
<dbReference type="GO" id="GO:0005886">
    <property type="term" value="C:plasma membrane"/>
    <property type="evidence" value="ECO:0007669"/>
    <property type="project" value="UniProtKB-SubCell"/>
</dbReference>
<dbReference type="GO" id="GO:0022857">
    <property type="term" value="F:transmembrane transporter activity"/>
    <property type="evidence" value="ECO:0007669"/>
    <property type="project" value="InterPro"/>
</dbReference>
<dbReference type="GO" id="GO:0033214">
    <property type="term" value="P:siderophore-dependent iron import into cell"/>
    <property type="evidence" value="ECO:0007669"/>
    <property type="project" value="TreeGrafter"/>
</dbReference>
<dbReference type="CDD" id="cd06550">
    <property type="entry name" value="TM_ABC_iron-siderophores_like"/>
    <property type="match status" value="1"/>
</dbReference>
<dbReference type="FunFam" id="1.10.3470.10:FF:000004">
    <property type="entry name" value="Iron compound ABC transporter, permease"/>
    <property type="match status" value="1"/>
</dbReference>
<dbReference type="Gene3D" id="1.10.3470.10">
    <property type="entry name" value="ABC transporter involved in vitamin B12 uptake, BtuC"/>
    <property type="match status" value="1"/>
</dbReference>
<dbReference type="InterPro" id="IPR037294">
    <property type="entry name" value="ABC_BtuC-like"/>
</dbReference>
<dbReference type="InterPro" id="IPR000522">
    <property type="entry name" value="ABC_transptr_permease_BtuC"/>
</dbReference>
<dbReference type="PANTHER" id="PTHR30472">
    <property type="entry name" value="FERRIC ENTEROBACTIN TRANSPORT SYSTEM PERMEASE PROTEIN"/>
    <property type="match status" value="1"/>
</dbReference>
<dbReference type="PANTHER" id="PTHR30472:SF19">
    <property type="entry name" value="PETROBACTIN IMPORT SYSTEM PERMEASE PROTEIN YCLO"/>
    <property type="match status" value="1"/>
</dbReference>
<dbReference type="Pfam" id="PF01032">
    <property type="entry name" value="FecCD"/>
    <property type="match status" value="1"/>
</dbReference>
<dbReference type="SUPFAM" id="SSF81345">
    <property type="entry name" value="ABC transporter involved in vitamin B12 uptake, BtuC"/>
    <property type="match status" value="1"/>
</dbReference>
<accession>Q81XB2</accession>
<accession>E9QQW5</accession>
<accession>E9QQW6</accession>
<accession>Q6HR47</accession>
<accession>Q6KKG4</accession>
<gene>
    <name evidence="3" type="primary">fatC</name>
    <name evidence="6" type="ordered locus">GBAA_5328</name>
</gene>